<feature type="chain" id="PRO_0000387160" description="Ribosomal RNA small subunit methyltransferase H">
    <location>
        <begin position="1"/>
        <end position="316"/>
    </location>
</feature>
<feature type="binding site" evidence="1">
    <location>
        <begin position="35"/>
        <end position="37"/>
    </location>
    <ligand>
        <name>S-adenosyl-L-methionine</name>
        <dbReference type="ChEBI" id="CHEBI:59789"/>
    </ligand>
</feature>
<feature type="binding site" evidence="1">
    <location>
        <position position="55"/>
    </location>
    <ligand>
        <name>S-adenosyl-L-methionine</name>
        <dbReference type="ChEBI" id="CHEBI:59789"/>
    </ligand>
</feature>
<feature type="binding site" evidence="1">
    <location>
        <position position="84"/>
    </location>
    <ligand>
        <name>S-adenosyl-L-methionine</name>
        <dbReference type="ChEBI" id="CHEBI:59789"/>
    </ligand>
</feature>
<feature type="binding site" evidence="1">
    <location>
        <position position="105"/>
    </location>
    <ligand>
        <name>S-adenosyl-L-methionine</name>
        <dbReference type="ChEBI" id="CHEBI:59789"/>
    </ligand>
</feature>
<feature type="binding site" evidence="1">
    <location>
        <position position="112"/>
    </location>
    <ligand>
        <name>S-adenosyl-L-methionine</name>
        <dbReference type="ChEBI" id="CHEBI:59789"/>
    </ligand>
</feature>
<gene>
    <name evidence="1" type="primary">rsmH</name>
    <name type="synonym">mraW</name>
    <name type="ordered locus">MGAS10270_Spy1486</name>
</gene>
<comment type="function">
    <text evidence="1">Specifically methylates the N4 position of cytidine in position 1402 (C1402) of 16S rRNA.</text>
</comment>
<comment type="catalytic activity">
    <reaction evidence="1">
        <text>cytidine(1402) in 16S rRNA + S-adenosyl-L-methionine = N(4)-methylcytidine(1402) in 16S rRNA + S-adenosyl-L-homocysteine + H(+)</text>
        <dbReference type="Rhea" id="RHEA:42928"/>
        <dbReference type="Rhea" id="RHEA-COMP:10286"/>
        <dbReference type="Rhea" id="RHEA-COMP:10287"/>
        <dbReference type="ChEBI" id="CHEBI:15378"/>
        <dbReference type="ChEBI" id="CHEBI:57856"/>
        <dbReference type="ChEBI" id="CHEBI:59789"/>
        <dbReference type="ChEBI" id="CHEBI:74506"/>
        <dbReference type="ChEBI" id="CHEBI:82748"/>
        <dbReference type="EC" id="2.1.1.199"/>
    </reaction>
</comment>
<comment type="subcellular location">
    <subcellularLocation>
        <location evidence="1">Cytoplasm</location>
    </subcellularLocation>
</comment>
<comment type="similarity">
    <text evidence="1">Belongs to the methyltransferase superfamily. RsmH family.</text>
</comment>
<comment type="sequence caution" evidence="2">
    <conflict type="erroneous initiation">
        <sequence resource="EMBL-CDS" id="ABF34551"/>
    </conflict>
</comment>
<sequence length="316" mass="35688">MTKEFHHVTVLLHETVDMLDIKPDGIYVDATLGGSGHSAYLLSKLGEEGHLYCFDQDQKAIDNAQVTLKSYIDKGQVTFIKDNFRHLKARLTALGVDEIDGILYDLGVSSPQLDERERGFSYKQDAPLDMRMDRQSLLTAYEVVNTYPFNDLVKIFFKYGEDKFSKQIARKIEQARAIKPIETTTELAELIKAAKPAKELKKKGHPAKQIFQAIRIEVNDELGAADESIQDAMELLALDGRISVITFHSLEDRLTKQLFKEASTVDVPKGLPLIPEDMKPKFELVSRKPILPSHSELTANKRAHSAKLRVAKKIRK</sequence>
<organism>
    <name type="scientific">Streptococcus pyogenes serotype M2 (strain MGAS10270)</name>
    <dbReference type="NCBI Taxonomy" id="370552"/>
    <lineage>
        <taxon>Bacteria</taxon>
        <taxon>Bacillati</taxon>
        <taxon>Bacillota</taxon>
        <taxon>Bacilli</taxon>
        <taxon>Lactobacillales</taxon>
        <taxon>Streptococcaceae</taxon>
        <taxon>Streptococcus</taxon>
    </lineage>
</organism>
<protein>
    <recommendedName>
        <fullName evidence="1">Ribosomal RNA small subunit methyltransferase H</fullName>
        <ecNumber evidence="1">2.1.1.199</ecNumber>
    </recommendedName>
    <alternativeName>
        <fullName evidence="1">16S rRNA m(4)C1402 methyltransferase</fullName>
    </alternativeName>
    <alternativeName>
        <fullName evidence="1">rRNA (cytosine-N(4)-)-methyltransferase RsmH</fullName>
    </alternativeName>
</protein>
<reference key="1">
    <citation type="journal article" date="2006" name="Proc. Natl. Acad. Sci. U.S.A.">
        <title>Molecular genetic anatomy of inter- and intraserotype variation in the human bacterial pathogen group A Streptococcus.</title>
        <authorList>
            <person name="Beres S.B."/>
            <person name="Richter E.W."/>
            <person name="Nagiec M.J."/>
            <person name="Sumby P."/>
            <person name="Porcella S.F."/>
            <person name="DeLeo F.R."/>
            <person name="Musser J.M."/>
        </authorList>
    </citation>
    <scope>NUCLEOTIDE SEQUENCE [LARGE SCALE GENOMIC DNA]</scope>
    <source>
        <strain>MGAS10270</strain>
    </source>
</reference>
<accession>Q1JFK8</accession>
<proteinExistence type="inferred from homology"/>
<evidence type="ECO:0000255" key="1">
    <source>
        <dbReference type="HAMAP-Rule" id="MF_01007"/>
    </source>
</evidence>
<evidence type="ECO:0000305" key="2"/>
<name>RSMH_STRPD</name>
<keyword id="KW-0963">Cytoplasm</keyword>
<keyword id="KW-0489">Methyltransferase</keyword>
<keyword id="KW-0698">rRNA processing</keyword>
<keyword id="KW-0949">S-adenosyl-L-methionine</keyword>
<keyword id="KW-0808">Transferase</keyword>
<dbReference type="EC" id="2.1.1.199" evidence="1"/>
<dbReference type="EMBL" id="CP000260">
    <property type="protein sequence ID" value="ABF34551.1"/>
    <property type="status" value="ALT_INIT"/>
    <property type="molecule type" value="Genomic_DNA"/>
</dbReference>
<dbReference type="SMR" id="Q1JFK8"/>
<dbReference type="KEGG" id="sph:MGAS10270_Spy1486"/>
<dbReference type="HOGENOM" id="CLU_038422_2_0_9"/>
<dbReference type="Proteomes" id="UP000002436">
    <property type="component" value="Chromosome"/>
</dbReference>
<dbReference type="GO" id="GO:0005737">
    <property type="term" value="C:cytoplasm"/>
    <property type="evidence" value="ECO:0007669"/>
    <property type="project" value="UniProtKB-SubCell"/>
</dbReference>
<dbReference type="GO" id="GO:0071424">
    <property type="term" value="F:rRNA (cytosine-N4-)-methyltransferase activity"/>
    <property type="evidence" value="ECO:0007669"/>
    <property type="project" value="UniProtKB-UniRule"/>
</dbReference>
<dbReference type="GO" id="GO:0070475">
    <property type="term" value="P:rRNA base methylation"/>
    <property type="evidence" value="ECO:0007669"/>
    <property type="project" value="UniProtKB-UniRule"/>
</dbReference>
<dbReference type="FunFam" id="1.10.150.170:FF:000001">
    <property type="entry name" value="Ribosomal RNA small subunit methyltransferase H"/>
    <property type="match status" value="1"/>
</dbReference>
<dbReference type="Gene3D" id="1.10.150.170">
    <property type="entry name" value="Putative methyltransferase TM0872, insert domain"/>
    <property type="match status" value="1"/>
</dbReference>
<dbReference type="Gene3D" id="3.40.50.150">
    <property type="entry name" value="Vaccinia Virus protein VP39"/>
    <property type="match status" value="1"/>
</dbReference>
<dbReference type="HAMAP" id="MF_01007">
    <property type="entry name" value="16SrRNA_methyltr_H"/>
    <property type="match status" value="1"/>
</dbReference>
<dbReference type="InterPro" id="IPR002903">
    <property type="entry name" value="RsmH"/>
</dbReference>
<dbReference type="InterPro" id="IPR023397">
    <property type="entry name" value="SAM-dep_MeTrfase_MraW_recog"/>
</dbReference>
<dbReference type="InterPro" id="IPR029063">
    <property type="entry name" value="SAM-dependent_MTases_sf"/>
</dbReference>
<dbReference type="NCBIfam" id="TIGR00006">
    <property type="entry name" value="16S rRNA (cytosine(1402)-N(4))-methyltransferase RsmH"/>
    <property type="match status" value="1"/>
</dbReference>
<dbReference type="PANTHER" id="PTHR11265:SF0">
    <property type="entry name" value="12S RRNA N4-METHYLCYTIDINE METHYLTRANSFERASE"/>
    <property type="match status" value="1"/>
</dbReference>
<dbReference type="PANTHER" id="PTHR11265">
    <property type="entry name" value="S-ADENOSYL-METHYLTRANSFERASE MRAW"/>
    <property type="match status" value="1"/>
</dbReference>
<dbReference type="Pfam" id="PF01795">
    <property type="entry name" value="Methyltransf_5"/>
    <property type="match status" value="1"/>
</dbReference>
<dbReference type="PIRSF" id="PIRSF004486">
    <property type="entry name" value="MraW"/>
    <property type="match status" value="1"/>
</dbReference>
<dbReference type="SUPFAM" id="SSF81799">
    <property type="entry name" value="Putative methyltransferase TM0872, insert domain"/>
    <property type="match status" value="1"/>
</dbReference>
<dbReference type="SUPFAM" id="SSF53335">
    <property type="entry name" value="S-adenosyl-L-methionine-dependent methyltransferases"/>
    <property type="match status" value="1"/>
</dbReference>